<dbReference type="EC" id="7.4.2.11" evidence="1"/>
<dbReference type="EMBL" id="CP000305">
    <property type="protein sequence ID" value="ABG19253.1"/>
    <property type="molecule type" value="Genomic_DNA"/>
</dbReference>
<dbReference type="EMBL" id="ACNQ01000017">
    <property type="protein sequence ID" value="EEO75402.1"/>
    <property type="molecule type" value="Genomic_DNA"/>
</dbReference>
<dbReference type="SMR" id="Q1CFH7"/>
<dbReference type="KEGG" id="ypn:YPN_2926"/>
<dbReference type="HOGENOM" id="CLU_000604_1_3_6"/>
<dbReference type="Proteomes" id="UP000008936">
    <property type="component" value="Chromosome"/>
</dbReference>
<dbReference type="GO" id="GO:0009276">
    <property type="term" value="C:Gram-negative-bacterium-type cell wall"/>
    <property type="evidence" value="ECO:0007669"/>
    <property type="project" value="InterPro"/>
</dbReference>
<dbReference type="GO" id="GO:0005886">
    <property type="term" value="C:plasma membrane"/>
    <property type="evidence" value="ECO:0007669"/>
    <property type="project" value="UniProtKB-SubCell"/>
</dbReference>
<dbReference type="GO" id="GO:0033232">
    <property type="term" value="F:ABC-type D-methionine transporter activity"/>
    <property type="evidence" value="ECO:0007669"/>
    <property type="project" value="UniProtKB-EC"/>
</dbReference>
<dbReference type="GO" id="GO:0005524">
    <property type="term" value="F:ATP binding"/>
    <property type="evidence" value="ECO:0007669"/>
    <property type="project" value="UniProtKB-KW"/>
</dbReference>
<dbReference type="GO" id="GO:0016887">
    <property type="term" value="F:ATP hydrolysis activity"/>
    <property type="evidence" value="ECO:0007669"/>
    <property type="project" value="InterPro"/>
</dbReference>
<dbReference type="CDD" id="cd03258">
    <property type="entry name" value="ABC_MetN_methionine_transporter"/>
    <property type="match status" value="1"/>
</dbReference>
<dbReference type="FunFam" id="3.40.50.300:FF:000233">
    <property type="entry name" value="Methionine import ATP-binding protein MetN"/>
    <property type="match status" value="1"/>
</dbReference>
<dbReference type="Gene3D" id="3.30.70.260">
    <property type="match status" value="1"/>
</dbReference>
<dbReference type="Gene3D" id="3.40.50.300">
    <property type="entry name" value="P-loop containing nucleotide triphosphate hydrolases"/>
    <property type="match status" value="1"/>
</dbReference>
<dbReference type="InterPro" id="IPR003593">
    <property type="entry name" value="AAA+_ATPase"/>
</dbReference>
<dbReference type="InterPro" id="IPR012692">
    <property type="entry name" value="ABC_MetN_proteobac"/>
</dbReference>
<dbReference type="InterPro" id="IPR003439">
    <property type="entry name" value="ABC_transporter-like_ATP-bd"/>
</dbReference>
<dbReference type="InterPro" id="IPR017871">
    <property type="entry name" value="ABC_transporter-like_CS"/>
</dbReference>
<dbReference type="InterPro" id="IPR045865">
    <property type="entry name" value="ACT-like_dom_sf"/>
</dbReference>
<dbReference type="InterPro" id="IPR041701">
    <property type="entry name" value="MetN_ABC"/>
</dbReference>
<dbReference type="InterPro" id="IPR050086">
    <property type="entry name" value="MetN_ABC_transporter-like"/>
</dbReference>
<dbReference type="InterPro" id="IPR018449">
    <property type="entry name" value="NIL_domain"/>
</dbReference>
<dbReference type="InterPro" id="IPR027417">
    <property type="entry name" value="P-loop_NTPase"/>
</dbReference>
<dbReference type="NCBIfam" id="TIGR02314">
    <property type="entry name" value="ABC_MetN"/>
    <property type="match status" value="1"/>
</dbReference>
<dbReference type="PANTHER" id="PTHR43166">
    <property type="entry name" value="AMINO ACID IMPORT ATP-BINDING PROTEIN"/>
    <property type="match status" value="1"/>
</dbReference>
<dbReference type="PANTHER" id="PTHR43166:SF30">
    <property type="entry name" value="METHIONINE IMPORT ATP-BINDING PROTEIN METN"/>
    <property type="match status" value="1"/>
</dbReference>
<dbReference type="Pfam" id="PF00005">
    <property type="entry name" value="ABC_tran"/>
    <property type="match status" value="1"/>
</dbReference>
<dbReference type="Pfam" id="PF09383">
    <property type="entry name" value="NIL"/>
    <property type="match status" value="1"/>
</dbReference>
<dbReference type="SMART" id="SM00382">
    <property type="entry name" value="AAA"/>
    <property type="match status" value="1"/>
</dbReference>
<dbReference type="SMART" id="SM00930">
    <property type="entry name" value="NIL"/>
    <property type="match status" value="1"/>
</dbReference>
<dbReference type="SUPFAM" id="SSF55021">
    <property type="entry name" value="ACT-like"/>
    <property type="match status" value="1"/>
</dbReference>
<dbReference type="SUPFAM" id="SSF52540">
    <property type="entry name" value="P-loop containing nucleoside triphosphate hydrolases"/>
    <property type="match status" value="1"/>
</dbReference>
<dbReference type="PROSITE" id="PS00211">
    <property type="entry name" value="ABC_TRANSPORTER_1"/>
    <property type="match status" value="1"/>
</dbReference>
<dbReference type="PROSITE" id="PS50893">
    <property type="entry name" value="ABC_TRANSPORTER_2"/>
    <property type="match status" value="1"/>
</dbReference>
<dbReference type="PROSITE" id="PS51264">
    <property type="entry name" value="METN"/>
    <property type="match status" value="1"/>
</dbReference>
<organism>
    <name type="scientific">Yersinia pestis bv. Antiqua (strain Nepal516)</name>
    <dbReference type="NCBI Taxonomy" id="377628"/>
    <lineage>
        <taxon>Bacteria</taxon>
        <taxon>Pseudomonadati</taxon>
        <taxon>Pseudomonadota</taxon>
        <taxon>Gammaproteobacteria</taxon>
        <taxon>Enterobacterales</taxon>
        <taxon>Yersiniaceae</taxon>
        <taxon>Yersinia</taxon>
    </lineage>
</organism>
<protein>
    <recommendedName>
        <fullName evidence="1">Methionine import ATP-binding protein MetN 2</fullName>
        <ecNumber evidence="1">7.4.2.11</ecNumber>
    </recommendedName>
</protein>
<name>METN2_YERPN</name>
<comment type="function">
    <text evidence="1">Part of the ABC transporter complex MetNIQ involved in methionine import. Responsible for energy coupling to the transport system.</text>
</comment>
<comment type="catalytic activity">
    <reaction evidence="1">
        <text>L-methionine(out) + ATP + H2O = L-methionine(in) + ADP + phosphate + H(+)</text>
        <dbReference type="Rhea" id="RHEA:29779"/>
        <dbReference type="ChEBI" id="CHEBI:15377"/>
        <dbReference type="ChEBI" id="CHEBI:15378"/>
        <dbReference type="ChEBI" id="CHEBI:30616"/>
        <dbReference type="ChEBI" id="CHEBI:43474"/>
        <dbReference type="ChEBI" id="CHEBI:57844"/>
        <dbReference type="ChEBI" id="CHEBI:456216"/>
        <dbReference type="EC" id="7.4.2.11"/>
    </reaction>
</comment>
<comment type="catalytic activity">
    <reaction evidence="1">
        <text>D-methionine(out) + ATP + H2O = D-methionine(in) + ADP + phosphate + H(+)</text>
        <dbReference type="Rhea" id="RHEA:29767"/>
        <dbReference type="ChEBI" id="CHEBI:15377"/>
        <dbReference type="ChEBI" id="CHEBI:15378"/>
        <dbReference type="ChEBI" id="CHEBI:30616"/>
        <dbReference type="ChEBI" id="CHEBI:43474"/>
        <dbReference type="ChEBI" id="CHEBI:57932"/>
        <dbReference type="ChEBI" id="CHEBI:456216"/>
        <dbReference type="EC" id="7.4.2.11"/>
    </reaction>
</comment>
<comment type="subunit">
    <text evidence="1">The complex is composed of two ATP-binding proteins (MetN), two transmembrane proteins (MetI) and a solute-binding protein (MetQ).</text>
</comment>
<comment type="subcellular location">
    <subcellularLocation>
        <location evidence="1">Cell inner membrane</location>
        <topology evidence="1">Peripheral membrane protein</topology>
    </subcellularLocation>
</comment>
<comment type="similarity">
    <text evidence="1">Belongs to the ABC transporter superfamily. Methionine importer (TC 3.A.1.24) family.</text>
</comment>
<evidence type="ECO:0000255" key="1">
    <source>
        <dbReference type="HAMAP-Rule" id="MF_01719"/>
    </source>
</evidence>
<proteinExistence type="inferred from homology"/>
<keyword id="KW-0029">Amino-acid transport</keyword>
<keyword id="KW-0067">ATP-binding</keyword>
<keyword id="KW-0997">Cell inner membrane</keyword>
<keyword id="KW-1003">Cell membrane</keyword>
<keyword id="KW-0472">Membrane</keyword>
<keyword id="KW-0547">Nucleotide-binding</keyword>
<keyword id="KW-1278">Translocase</keyword>
<keyword id="KW-0813">Transport</keyword>
<gene>
    <name evidence="1" type="primary">metN2</name>
    <name type="ordered locus">YPN_2926</name>
    <name type="ORF">YP516_3316</name>
</gene>
<accession>Q1CFH7</accession>
<accession>C4GWV2</accession>
<feature type="chain" id="PRO_0000270451" description="Methionine import ATP-binding protein MetN 2">
    <location>
        <begin position="1"/>
        <end position="343"/>
    </location>
</feature>
<feature type="domain" description="ABC transporter" evidence="1">
    <location>
        <begin position="2"/>
        <end position="241"/>
    </location>
</feature>
<feature type="binding site" evidence="1">
    <location>
        <begin position="38"/>
        <end position="45"/>
    </location>
    <ligand>
        <name>ATP</name>
        <dbReference type="ChEBI" id="CHEBI:30616"/>
    </ligand>
</feature>
<sequence length="343" mass="37533">MIKLTHISKVFQQGSRTITALSDVSLHVPAGQIYGVIGASGAGKSTLIRCANMLERPTSGQVLVDDQDLTTLSEGQLTRARRQIGMIFQHFNLLSSRTVYGNIALPLELDNTSRADIKKRVNELLDLVGLTDKQDAYPANLSGGQKQRVAIARALASNPKVLLCDEATSALDPATTRSILELLKDINRRLGLTILLITHEMDVVKRICDQVAVISEGKLIEKDSVSEVFSHPKTPLAQQFIQSTLHLDIPEDYAKRMSPEPTVDHVPLLKLEFTGKSVDAPLISQAVRRFNIDIGILSSQMDYAGGVKFGVMLAELHGDVQDGLAAIKFLQDHHVKVEVLGYV</sequence>
<reference key="1">
    <citation type="journal article" date="2006" name="J. Bacteriol.">
        <title>Complete genome sequence of Yersinia pestis strains Antiqua and Nepal516: evidence of gene reduction in an emerging pathogen.</title>
        <authorList>
            <person name="Chain P.S.G."/>
            <person name="Hu P."/>
            <person name="Malfatti S.A."/>
            <person name="Radnedge L."/>
            <person name="Larimer F."/>
            <person name="Vergez L.M."/>
            <person name="Worsham P."/>
            <person name="Chu M.C."/>
            <person name="Andersen G.L."/>
        </authorList>
    </citation>
    <scope>NUCLEOTIDE SEQUENCE [LARGE SCALE GENOMIC DNA]</scope>
    <source>
        <strain>Nepal516</strain>
    </source>
</reference>
<reference key="2">
    <citation type="submission" date="2009-04" db="EMBL/GenBank/DDBJ databases">
        <title>Yersinia pestis Nepal516A whole genome shotgun sequencing project.</title>
        <authorList>
            <person name="Plunkett G. III"/>
            <person name="Anderson B.D."/>
            <person name="Baumler D.J."/>
            <person name="Burland V."/>
            <person name="Cabot E.L."/>
            <person name="Glasner J.D."/>
            <person name="Mau B."/>
            <person name="Neeno-Eckwall E."/>
            <person name="Perna N.T."/>
            <person name="Munk A.C."/>
            <person name="Tapia R."/>
            <person name="Green L.D."/>
            <person name="Rogers Y.C."/>
            <person name="Detter J.C."/>
            <person name="Bruce D.C."/>
            <person name="Brettin T.S."/>
        </authorList>
    </citation>
    <scope>NUCLEOTIDE SEQUENCE [LARGE SCALE GENOMIC DNA]</scope>
    <source>
        <strain>Nepal516</strain>
    </source>
</reference>